<keyword id="KW-0963">Cytoplasm</keyword>
<keyword id="KW-0456">Lyase</keyword>
<keyword id="KW-0816">Tricarboxylic acid cycle</keyword>
<sequence length="461" mass="51108">MSVRIEHDTFGEIEVPADKYWGAQTERSKRNFPVGKERMPIEVVYGFAQLKRAAALANFDLGKLSEAKKDAIVYACDQILSGELDEHFPLVVWQTGSGTQSNMNVNEVVSYVANMYLKDHHSDESIHPNDDVNKSQSSNDTFPTAMHVALYQEVETKLEPALKLLRNTLKEKEDKFDSIIKIGRTHLQDATPIKLGQEISGWRYMLDRCETMLSESKKHILNLAIGGTAVGTGINAHPEFGDKVAQYISENTGYPFVSSENKFHALTAHDEVVQLHGTLKALAGDLMKIANDVRWLASGPRAGLAEISIPENEPGSSIMPGKVNPTQCEMLTMVAVQVMGNDTVVGFASSQGNFELNVYKPVIMHNTLQSIYLLADGMETFNNNCAVGIEPIEENIDNYLNQSLMLVTALNPHIGYEKAAQIAKKAHKEGLTLKESAIQTGYVTEEQFEAWIKPEDMVDPH</sequence>
<dbReference type="EC" id="4.2.1.2" evidence="1"/>
<dbReference type="EMBL" id="BX571856">
    <property type="protein sequence ID" value="CAG40929.1"/>
    <property type="molecule type" value="Genomic_DNA"/>
</dbReference>
<dbReference type="RefSeq" id="WP_000116227.1">
    <property type="nucleotide sequence ID" value="NC_002952.2"/>
</dbReference>
<dbReference type="SMR" id="Q6GFK5"/>
<dbReference type="KEGG" id="sar:SAR1942"/>
<dbReference type="HOGENOM" id="CLU_021594_4_1_9"/>
<dbReference type="UniPathway" id="UPA00223">
    <property type="reaction ID" value="UER01007"/>
</dbReference>
<dbReference type="Proteomes" id="UP000000596">
    <property type="component" value="Chromosome"/>
</dbReference>
<dbReference type="GO" id="GO:0005737">
    <property type="term" value="C:cytoplasm"/>
    <property type="evidence" value="ECO:0007669"/>
    <property type="project" value="UniProtKB-SubCell"/>
</dbReference>
<dbReference type="GO" id="GO:0004333">
    <property type="term" value="F:fumarate hydratase activity"/>
    <property type="evidence" value="ECO:0007669"/>
    <property type="project" value="UniProtKB-UniRule"/>
</dbReference>
<dbReference type="GO" id="GO:0006106">
    <property type="term" value="P:fumarate metabolic process"/>
    <property type="evidence" value="ECO:0007669"/>
    <property type="project" value="InterPro"/>
</dbReference>
<dbReference type="GO" id="GO:0006108">
    <property type="term" value="P:malate metabolic process"/>
    <property type="evidence" value="ECO:0007669"/>
    <property type="project" value="TreeGrafter"/>
</dbReference>
<dbReference type="GO" id="GO:0006099">
    <property type="term" value="P:tricarboxylic acid cycle"/>
    <property type="evidence" value="ECO:0007669"/>
    <property type="project" value="UniProtKB-UniRule"/>
</dbReference>
<dbReference type="CDD" id="cd01362">
    <property type="entry name" value="Fumarase_classII"/>
    <property type="match status" value="1"/>
</dbReference>
<dbReference type="FunFam" id="1.10.40.30:FF:000002">
    <property type="entry name" value="Fumarate hydratase class II"/>
    <property type="match status" value="1"/>
</dbReference>
<dbReference type="FunFam" id="1.10.275.10:FF:000001">
    <property type="entry name" value="Fumarate hydratase, mitochondrial"/>
    <property type="match status" value="1"/>
</dbReference>
<dbReference type="FunFam" id="1.20.200.10:FF:000001">
    <property type="entry name" value="Fumarate hydratase, mitochondrial"/>
    <property type="match status" value="1"/>
</dbReference>
<dbReference type="Gene3D" id="1.10.40.30">
    <property type="entry name" value="Fumarase/aspartase (C-terminal domain)"/>
    <property type="match status" value="1"/>
</dbReference>
<dbReference type="Gene3D" id="1.20.200.10">
    <property type="entry name" value="Fumarase/aspartase (Central domain)"/>
    <property type="match status" value="1"/>
</dbReference>
<dbReference type="Gene3D" id="1.10.275.10">
    <property type="entry name" value="Fumarase/aspartase (N-terminal domain)"/>
    <property type="match status" value="1"/>
</dbReference>
<dbReference type="HAMAP" id="MF_00743">
    <property type="entry name" value="FumaraseC"/>
    <property type="match status" value="1"/>
</dbReference>
<dbReference type="InterPro" id="IPR005677">
    <property type="entry name" value="Fum_hydII"/>
</dbReference>
<dbReference type="InterPro" id="IPR024083">
    <property type="entry name" value="Fumarase/histidase_N"/>
</dbReference>
<dbReference type="InterPro" id="IPR018951">
    <property type="entry name" value="Fumarase_C_C"/>
</dbReference>
<dbReference type="InterPro" id="IPR020557">
    <property type="entry name" value="Fumarate_lyase_CS"/>
</dbReference>
<dbReference type="InterPro" id="IPR000362">
    <property type="entry name" value="Fumarate_lyase_fam"/>
</dbReference>
<dbReference type="InterPro" id="IPR022761">
    <property type="entry name" value="Fumarate_lyase_N"/>
</dbReference>
<dbReference type="InterPro" id="IPR008948">
    <property type="entry name" value="L-Aspartase-like"/>
</dbReference>
<dbReference type="NCBIfam" id="TIGR00979">
    <property type="entry name" value="fumC_II"/>
    <property type="match status" value="1"/>
</dbReference>
<dbReference type="NCBIfam" id="NF008909">
    <property type="entry name" value="PRK12273.1"/>
    <property type="match status" value="1"/>
</dbReference>
<dbReference type="PANTHER" id="PTHR11444">
    <property type="entry name" value="ASPARTATEAMMONIA/ARGININOSUCCINATE/ADENYLOSUCCINATE LYASE"/>
    <property type="match status" value="1"/>
</dbReference>
<dbReference type="PANTHER" id="PTHR11444:SF1">
    <property type="entry name" value="FUMARATE HYDRATASE, MITOCHONDRIAL"/>
    <property type="match status" value="1"/>
</dbReference>
<dbReference type="Pfam" id="PF10415">
    <property type="entry name" value="FumaraseC_C"/>
    <property type="match status" value="1"/>
</dbReference>
<dbReference type="Pfam" id="PF00206">
    <property type="entry name" value="Lyase_1"/>
    <property type="match status" value="1"/>
</dbReference>
<dbReference type="PRINTS" id="PR00145">
    <property type="entry name" value="ARGSUCLYASE"/>
</dbReference>
<dbReference type="PRINTS" id="PR00149">
    <property type="entry name" value="FUMRATELYASE"/>
</dbReference>
<dbReference type="SUPFAM" id="SSF48557">
    <property type="entry name" value="L-aspartase-like"/>
    <property type="match status" value="1"/>
</dbReference>
<dbReference type="PROSITE" id="PS00163">
    <property type="entry name" value="FUMARATE_LYASES"/>
    <property type="match status" value="1"/>
</dbReference>
<gene>
    <name evidence="1" type="primary">fumC</name>
    <name type="synonym">citG</name>
    <name type="ordered locus">SAR1942</name>
</gene>
<name>FUMC_STAAR</name>
<comment type="function">
    <text evidence="1">Involved in the TCA cycle. Catalyzes the stereospecific interconversion of fumarate to L-malate.</text>
</comment>
<comment type="catalytic activity">
    <reaction evidence="1">
        <text>(S)-malate = fumarate + H2O</text>
        <dbReference type="Rhea" id="RHEA:12460"/>
        <dbReference type="ChEBI" id="CHEBI:15377"/>
        <dbReference type="ChEBI" id="CHEBI:15589"/>
        <dbReference type="ChEBI" id="CHEBI:29806"/>
        <dbReference type="EC" id="4.2.1.2"/>
    </reaction>
</comment>
<comment type="pathway">
    <text evidence="1">Carbohydrate metabolism; tricarboxylic acid cycle; (S)-malate from fumarate: step 1/1.</text>
</comment>
<comment type="subunit">
    <text evidence="1">Homotetramer.</text>
</comment>
<comment type="subcellular location">
    <subcellularLocation>
        <location evidence="1">Cytoplasm</location>
    </subcellularLocation>
</comment>
<comment type="miscellaneous">
    <text evidence="1">There are 2 substrate-binding sites: the catalytic A site, and the non-catalytic B site that may play a role in the transfer of substrate or product between the active site and the solvent. Alternatively, the B site may bind allosteric effectors.</text>
</comment>
<comment type="similarity">
    <text evidence="1">Belongs to the class-II fumarase/aspartase family. Fumarase subfamily.</text>
</comment>
<proteinExistence type="inferred from homology"/>
<feature type="chain" id="PRO_0000161314" description="Fumarate hydratase class II">
    <location>
        <begin position="1"/>
        <end position="461"/>
    </location>
</feature>
<feature type="active site" description="Proton donor/acceptor" evidence="1">
    <location>
        <position position="186"/>
    </location>
</feature>
<feature type="active site" evidence="1">
    <location>
        <position position="316"/>
    </location>
</feature>
<feature type="binding site" evidence="1">
    <location>
        <begin position="97"/>
        <end position="99"/>
    </location>
    <ligand>
        <name>substrate</name>
    </ligand>
</feature>
<feature type="binding site" description="in site B" evidence="1">
    <location>
        <begin position="127"/>
        <end position="130"/>
    </location>
    <ligand>
        <name>substrate</name>
    </ligand>
</feature>
<feature type="binding site" evidence="1">
    <location>
        <begin position="137"/>
        <end position="139"/>
    </location>
    <ligand>
        <name>substrate</name>
    </ligand>
</feature>
<feature type="binding site" evidence="1">
    <location>
        <position position="185"/>
    </location>
    <ligand>
        <name>substrate</name>
    </ligand>
</feature>
<feature type="binding site" evidence="1">
    <location>
        <position position="317"/>
    </location>
    <ligand>
        <name>substrate</name>
    </ligand>
</feature>
<feature type="binding site" evidence="1">
    <location>
        <begin position="322"/>
        <end position="324"/>
    </location>
    <ligand>
        <name>substrate</name>
    </ligand>
</feature>
<feature type="site" description="Important for catalytic activity" evidence="1">
    <location>
        <position position="329"/>
    </location>
</feature>
<protein>
    <recommendedName>
        <fullName evidence="1">Fumarate hydratase class II</fullName>
        <shortName evidence="1">Fumarase C</shortName>
        <ecNumber evidence="1">4.2.1.2</ecNumber>
    </recommendedName>
    <alternativeName>
        <fullName evidence="1">Aerobic fumarase</fullName>
    </alternativeName>
    <alternativeName>
        <fullName evidence="1">Iron-independent fumarase</fullName>
    </alternativeName>
</protein>
<organism>
    <name type="scientific">Staphylococcus aureus (strain MRSA252)</name>
    <dbReference type="NCBI Taxonomy" id="282458"/>
    <lineage>
        <taxon>Bacteria</taxon>
        <taxon>Bacillati</taxon>
        <taxon>Bacillota</taxon>
        <taxon>Bacilli</taxon>
        <taxon>Bacillales</taxon>
        <taxon>Staphylococcaceae</taxon>
        <taxon>Staphylococcus</taxon>
    </lineage>
</organism>
<evidence type="ECO:0000255" key="1">
    <source>
        <dbReference type="HAMAP-Rule" id="MF_00743"/>
    </source>
</evidence>
<reference key="1">
    <citation type="journal article" date="2004" name="Proc. Natl. Acad. Sci. U.S.A.">
        <title>Complete genomes of two clinical Staphylococcus aureus strains: evidence for the rapid evolution of virulence and drug resistance.</title>
        <authorList>
            <person name="Holden M.T.G."/>
            <person name="Feil E.J."/>
            <person name="Lindsay J.A."/>
            <person name="Peacock S.J."/>
            <person name="Day N.P.J."/>
            <person name="Enright M.C."/>
            <person name="Foster T.J."/>
            <person name="Moore C.E."/>
            <person name="Hurst L."/>
            <person name="Atkin R."/>
            <person name="Barron A."/>
            <person name="Bason N."/>
            <person name="Bentley S.D."/>
            <person name="Chillingworth C."/>
            <person name="Chillingworth T."/>
            <person name="Churcher C."/>
            <person name="Clark L."/>
            <person name="Corton C."/>
            <person name="Cronin A."/>
            <person name="Doggett J."/>
            <person name="Dowd L."/>
            <person name="Feltwell T."/>
            <person name="Hance Z."/>
            <person name="Harris B."/>
            <person name="Hauser H."/>
            <person name="Holroyd S."/>
            <person name="Jagels K."/>
            <person name="James K.D."/>
            <person name="Lennard N."/>
            <person name="Line A."/>
            <person name="Mayes R."/>
            <person name="Moule S."/>
            <person name="Mungall K."/>
            <person name="Ormond D."/>
            <person name="Quail M.A."/>
            <person name="Rabbinowitsch E."/>
            <person name="Rutherford K.M."/>
            <person name="Sanders M."/>
            <person name="Sharp S."/>
            <person name="Simmonds M."/>
            <person name="Stevens K."/>
            <person name="Whitehead S."/>
            <person name="Barrell B.G."/>
            <person name="Spratt B.G."/>
            <person name="Parkhill J."/>
        </authorList>
    </citation>
    <scope>NUCLEOTIDE SEQUENCE [LARGE SCALE GENOMIC DNA]</scope>
    <source>
        <strain>MRSA252</strain>
    </source>
</reference>
<accession>Q6GFK5</accession>